<accession>O64763</accession>
<accession>Q4TU26</accession>
<comment type="function">
    <text evidence="5 6">E3 ubiquitin-protein ligase able to catalyze polyubiquitination with ubiquitin-conjugating enzyme E2 UBC8 in vitro. May be involved in the early steps of the plant defense signaling pathway.</text>
</comment>
<comment type="catalytic activity">
    <reaction evidence="5">
        <text>S-ubiquitinyl-[E2 ubiquitin-conjugating enzyme]-L-cysteine + [acceptor protein]-L-lysine = [E2 ubiquitin-conjugating enzyme]-L-cysteine + N(6)-ubiquitinyl-[acceptor protein]-L-lysine.</text>
        <dbReference type="EC" id="2.3.2.27"/>
    </reaction>
</comment>
<comment type="pathway">
    <text>Protein modification; protein ubiquitination.</text>
</comment>
<comment type="subcellular location">
    <subcellularLocation>
        <location evidence="7">Membrane</location>
        <topology evidence="7">Single-pass membrane protein</topology>
    </subcellularLocation>
</comment>
<comment type="induction">
    <text evidence="6">Up-regulated by chitin elicitors.</text>
</comment>
<comment type="domain">
    <text evidence="1">The RING-type zinc finger domain mediates binding to an E2 ubiquitin-conjugating enzyme.</text>
</comment>
<comment type="disruption phenotype">
    <text evidence="6">Susceptibility to powdery mildew pathogen E.cichoracearum.</text>
</comment>
<comment type="similarity">
    <text evidence="7">Belongs to the RING-type zinc finger family. ATL subfamily.</text>
</comment>
<keyword id="KW-0472">Membrane</keyword>
<keyword id="KW-0479">Metal-binding</keyword>
<keyword id="KW-0611">Plant defense</keyword>
<keyword id="KW-1185">Reference proteome</keyword>
<keyword id="KW-0732">Signal</keyword>
<keyword id="KW-0808">Transferase</keyword>
<keyword id="KW-0812">Transmembrane</keyword>
<keyword id="KW-1133">Transmembrane helix</keyword>
<keyword id="KW-0833">Ubl conjugation pathway</keyword>
<keyword id="KW-0862">Zinc</keyword>
<keyword id="KW-0863">Zinc-finger</keyword>
<sequence length="378" mass="41880">MAILDTKSSRWIPHNLLFLLLLLLLQSVPYGFGQTQTTPPGTTKTKPNDPVVVVITVLFLVIFFMVFGSIFCRRSNAQFSRSSIFRSTDADAESQVVRIRRLTARGLDAEAIETFPTFLYSEVKAVRIGKGGVECAVCLCEFEDDETLRLMPPCCHVFHADCVDVWLSEHSTCPLCRADLVLNQQGDDDDSTESYSGTDPGTISSSTDPERGMVLESSDAHLLDAVTWSNSNITPRSKSTGLSSWQITGILFPRSHSTGHSLIQPAGNLDRFTLRLPDDVRRQLMKTSRTMGHVALLPQARSSRSGYRSGSVGSERSAFPYGRKSNNNNRRLHSLSFSFSFRSGSVRSTFSGDAPKNLPTSIEAGERSFERLRPDERV</sequence>
<gene>
    <name type="primary">ATL9</name>
    <name type="ordered locus">At2g35000</name>
    <name type="ORF">F19I3.23</name>
</gene>
<feature type="signal peptide" evidence="2">
    <location>
        <begin position="1"/>
        <end position="33"/>
    </location>
</feature>
<feature type="chain" id="PRO_0000030706" description="E3 ubiquitin-protein ligase ATL9">
    <location>
        <begin position="34"/>
        <end position="378"/>
    </location>
</feature>
<feature type="transmembrane region" description="Helical" evidence="2">
    <location>
        <begin position="51"/>
        <end position="71"/>
    </location>
</feature>
<feature type="zinc finger region" description="RING-type; atypical" evidence="3">
    <location>
        <begin position="135"/>
        <end position="177"/>
    </location>
</feature>
<feature type="region of interest" description="Disordered" evidence="4">
    <location>
        <begin position="187"/>
        <end position="211"/>
    </location>
</feature>
<feature type="region of interest" description="Disordered" evidence="4">
    <location>
        <begin position="300"/>
        <end position="326"/>
    </location>
</feature>
<feature type="region of interest" description="Disordered" evidence="4">
    <location>
        <begin position="350"/>
        <end position="378"/>
    </location>
</feature>
<feature type="compositionally biased region" description="Polar residues" evidence="4">
    <location>
        <begin position="193"/>
        <end position="207"/>
    </location>
</feature>
<feature type="compositionally biased region" description="Low complexity" evidence="4">
    <location>
        <begin position="301"/>
        <end position="317"/>
    </location>
</feature>
<feature type="compositionally biased region" description="Basic and acidic residues" evidence="4">
    <location>
        <begin position="364"/>
        <end position="378"/>
    </location>
</feature>
<name>ATL9_ARATH</name>
<protein>
    <recommendedName>
        <fullName>E3 ubiquitin-protein ligase ATL9</fullName>
        <ecNumber evidence="5">2.3.2.27</ecNumber>
    </recommendedName>
    <alternativeName>
        <fullName>RING-H2 finger protein ATL9</fullName>
    </alternativeName>
    <alternativeName>
        <fullName evidence="7">RING-type E3 ubiquitin transferase ATL9</fullName>
    </alternativeName>
</protein>
<dbReference type="EC" id="2.3.2.27" evidence="5"/>
<dbReference type="EMBL" id="DQ059110">
    <property type="protein sequence ID" value="AAY57596.1"/>
    <property type="molecule type" value="mRNA"/>
</dbReference>
<dbReference type="EMBL" id="AC004238">
    <property type="protein sequence ID" value="AAC12839.1"/>
    <property type="molecule type" value="Genomic_DNA"/>
</dbReference>
<dbReference type="EMBL" id="CP002685">
    <property type="protein sequence ID" value="AEC09047.1"/>
    <property type="molecule type" value="Genomic_DNA"/>
</dbReference>
<dbReference type="EMBL" id="BT015733">
    <property type="protein sequence ID" value="AAU84670.1"/>
    <property type="molecule type" value="mRNA"/>
</dbReference>
<dbReference type="EMBL" id="BT020192">
    <property type="protein sequence ID" value="AAV43794.1"/>
    <property type="molecule type" value="mRNA"/>
</dbReference>
<dbReference type="EMBL" id="AK228813">
    <property type="protein sequence ID" value="BAF00709.1"/>
    <property type="molecule type" value="mRNA"/>
</dbReference>
<dbReference type="PIR" id="T00481">
    <property type="entry name" value="T00481"/>
</dbReference>
<dbReference type="RefSeq" id="NP_181045.1">
    <property type="nucleotide sequence ID" value="NM_129052.3"/>
</dbReference>
<dbReference type="SMR" id="O64763"/>
<dbReference type="STRING" id="3702.O64763"/>
<dbReference type="iPTMnet" id="O64763"/>
<dbReference type="PaxDb" id="3702-AT2G35000.1"/>
<dbReference type="ProteomicsDB" id="246580"/>
<dbReference type="EnsemblPlants" id="AT2G35000.1">
    <property type="protein sequence ID" value="AT2G35000.1"/>
    <property type="gene ID" value="AT2G35000"/>
</dbReference>
<dbReference type="GeneID" id="818064"/>
<dbReference type="Gramene" id="AT2G35000.1">
    <property type="protein sequence ID" value="AT2G35000.1"/>
    <property type="gene ID" value="AT2G35000"/>
</dbReference>
<dbReference type="KEGG" id="ath:AT2G35000"/>
<dbReference type="Araport" id="AT2G35000"/>
<dbReference type="TAIR" id="AT2G35000">
    <property type="gene designation" value="ATL9"/>
</dbReference>
<dbReference type="eggNOG" id="KOG0800">
    <property type="taxonomic scope" value="Eukaryota"/>
</dbReference>
<dbReference type="HOGENOM" id="CLU_035191_1_0_1"/>
<dbReference type="InParanoid" id="O64763"/>
<dbReference type="OMA" id="ERSAFPY"/>
<dbReference type="PhylomeDB" id="O64763"/>
<dbReference type="UniPathway" id="UPA00143"/>
<dbReference type="PRO" id="PR:O64763"/>
<dbReference type="Proteomes" id="UP000006548">
    <property type="component" value="Chromosome 2"/>
</dbReference>
<dbReference type="ExpressionAtlas" id="O64763">
    <property type="expression patterns" value="baseline and differential"/>
</dbReference>
<dbReference type="GO" id="GO:0016020">
    <property type="term" value="C:membrane"/>
    <property type="evidence" value="ECO:0007669"/>
    <property type="project" value="UniProtKB-SubCell"/>
</dbReference>
<dbReference type="GO" id="GO:0004842">
    <property type="term" value="F:ubiquitin-protein transferase activity"/>
    <property type="evidence" value="ECO:0000314"/>
    <property type="project" value="TAIR"/>
</dbReference>
<dbReference type="GO" id="GO:0008270">
    <property type="term" value="F:zinc ion binding"/>
    <property type="evidence" value="ECO:0007669"/>
    <property type="project" value="UniProtKB-KW"/>
</dbReference>
<dbReference type="GO" id="GO:0050832">
    <property type="term" value="P:defense response to fungus"/>
    <property type="evidence" value="ECO:0000315"/>
    <property type="project" value="TAIR"/>
</dbReference>
<dbReference type="GO" id="GO:0016567">
    <property type="term" value="P:protein ubiquitination"/>
    <property type="evidence" value="ECO:0000314"/>
    <property type="project" value="UniProtKB"/>
</dbReference>
<dbReference type="GO" id="GO:0010200">
    <property type="term" value="P:response to chitin"/>
    <property type="evidence" value="ECO:0000270"/>
    <property type="project" value="TAIR"/>
</dbReference>
<dbReference type="CDD" id="cd16461">
    <property type="entry name" value="RING-H2_EL5-like"/>
    <property type="match status" value="1"/>
</dbReference>
<dbReference type="FunFam" id="3.30.40.10:FF:000187">
    <property type="entry name" value="E3 ubiquitin-protein ligase ATL6"/>
    <property type="match status" value="1"/>
</dbReference>
<dbReference type="Gene3D" id="3.30.40.10">
    <property type="entry name" value="Zinc/RING finger domain, C3HC4 (zinc finger)"/>
    <property type="match status" value="1"/>
</dbReference>
<dbReference type="InterPro" id="IPR044600">
    <property type="entry name" value="ATL1/ATL16-like"/>
</dbReference>
<dbReference type="InterPro" id="IPR001841">
    <property type="entry name" value="Znf_RING"/>
</dbReference>
<dbReference type="InterPro" id="IPR013083">
    <property type="entry name" value="Znf_RING/FYVE/PHD"/>
</dbReference>
<dbReference type="PANTHER" id="PTHR46913">
    <property type="entry name" value="RING-H2 FINGER PROTEIN ATL16"/>
    <property type="match status" value="1"/>
</dbReference>
<dbReference type="PANTHER" id="PTHR46913:SF1">
    <property type="entry name" value="RING-H2 FINGER PROTEIN ATL16"/>
    <property type="match status" value="1"/>
</dbReference>
<dbReference type="Pfam" id="PF13639">
    <property type="entry name" value="zf-RING_2"/>
    <property type="match status" value="1"/>
</dbReference>
<dbReference type="SMART" id="SM00184">
    <property type="entry name" value="RING"/>
    <property type="match status" value="1"/>
</dbReference>
<dbReference type="SUPFAM" id="SSF57850">
    <property type="entry name" value="RING/U-box"/>
    <property type="match status" value="1"/>
</dbReference>
<dbReference type="PROSITE" id="PS50089">
    <property type="entry name" value="ZF_RING_2"/>
    <property type="match status" value="1"/>
</dbReference>
<organism>
    <name type="scientific">Arabidopsis thaliana</name>
    <name type="common">Mouse-ear cress</name>
    <dbReference type="NCBI Taxonomy" id="3702"/>
    <lineage>
        <taxon>Eukaryota</taxon>
        <taxon>Viridiplantae</taxon>
        <taxon>Streptophyta</taxon>
        <taxon>Embryophyta</taxon>
        <taxon>Tracheophyta</taxon>
        <taxon>Spermatophyta</taxon>
        <taxon>Magnoliopsida</taxon>
        <taxon>eudicotyledons</taxon>
        <taxon>Gunneridae</taxon>
        <taxon>Pentapetalae</taxon>
        <taxon>rosids</taxon>
        <taxon>malvids</taxon>
        <taxon>Brassicales</taxon>
        <taxon>Brassicaceae</taxon>
        <taxon>Camelineae</taxon>
        <taxon>Arabidopsis</taxon>
    </lineage>
</organism>
<reference key="1">
    <citation type="journal article" date="2005" name="Plant Physiol.">
        <title>Functional analysis of the RING-type ubiquitin ligase family of Arabidopsis.</title>
        <authorList>
            <person name="Stone S.L."/>
            <person name="Hauksdottir H."/>
            <person name="Troy A."/>
            <person name="Herschleb J."/>
            <person name="Kraft E."/>
            <person name="Callis J."/>
        </authorList>
    </citation>
    <scope>NUCLEOTIDE SEQUENCE [MRNA]</scope>
    <scope>FUNCTION</scope>
    <scope>CATALYTIC ACTIVITY</scope>
    <source>
        <strain>cv. Columbia</strain>
        <tissue>Leaf</tissue>
    </source>
</reference>
<reference key="2">
    <citation type="journal article" date="1999" name="Nature">
        <title>Sequence and analysis of chromosome 2 of the plant Arabidopsis thaliana.</title>
        <authorList>
            <person name="Lin X."/>
            <person name="Kaul S."/>
            <person name="Rounsley S.D."/>
            <person name="Shea T.P."/>
            <person name="Benito M.-I."/>
            <person name="Town C.D."/>
            <person name="Fujii C.Y."/>
            <person name="Mason T.M."/>
            <person name="Bowman C.L."/>
            <person name="Barnstead M.E."/>
            <person name="Feldblyum T.V."/>
            <person name="Buell C.R."/>
            <person name="Ketchum K.A."/>
            <person name="Lee J.J."/>
            <person name="Ronning C.M."/>
            <person name="Koo H.L."/>
            <person name="Moffat K.S."/>
            <person name="Cronin L.A."/>
            <person name="Shen M."/>
            <person name="Pai G."/>
            <person name="Van Aken S."/>
            <person name="Umayam L."/>
            <person name="Tallon L.J."/>
            <person name="Gill J.E."/>
            <person name="Adams M.D."/>
            <person name="Carrera A.J."/>
            <person name="Creasy T.H."/>
            <person name="Goodman H.M."/>
            <person name="Somerville C.R."/>
            <person name="Copenhaver G.P."/>
            <person name="Preuss D."/>
            <person name="Nierman W.C."/>
            <person name="White O."/>
            <person name="Eisen J.A."/>
            <person name="Salzberg S.L."/>
            <person name="Fraser C.M."/>
            <person name="Venter J.C."/>
        </authorList>
    </citation>
    <scope>NUCLEOTIDE SEQUENCE [LARGE SCALE GENOMIC DNA]</scope>
    <source>
        <strain>cv. Columbia</strain>
    </source>
</reference>
<reference key="3">
    <citation type="journal article" date="2017" name="Plant J.">
        <title>Araport11: a complete reannotation of the Arabidopsis thaliana reference genome.</title>
        <authorList>
            <person name="Cheng C.Y."/>
            <person name="Krishnakumar V."/>
            <person name="Chan A.P."/>
            <person name="Thibaud-Nissen F."/>
            <person name="Schobel S."/>
            <person name="Town C.D."/>
        </authorList>
    </citation>
    <scope>GENOME REANNOTATION</scope>
    <source>
        <strain>cv. Columbia</strain>
    </source>
</reference>
<reference key="4">
    <citation type="submission" date="2004-11" db="EMBL/GenBank/DDBJ databases">
        <title>Arabidopsis ORF clones.</title>
        <authorList>
            <person name="Shinn P."/>
            <person name="Chen H."/>
            <person name="Cheuk R.F."/>
            <person name="Kim C.J."/>
            <person name="Ecker J.R."/>
        </authorList>
    </citation>
    <scope>NUCLEOTIDE SEQUENCE [LARGE SCALE MRNA]</scope>
    <source>
        <strain>cv. Columbia</strain>
    </source>
</reference>
<reference key="5">
    <citation type="submission" date="2006-07" db="EMBL/GenBank/DDBJ databases">
        <title>Large-scale analysis of RIKEN Arabidopsis full-length (RAFL) cDNAs.</title>
        <authorList>
            <person name="Totoki Y."/>
            <person name="Seki M."/>
            <person name="Ishida J."/>
            <person name="Nakajima M."/>
            <person name="Enju A."/>
            <person name="Kamiya A."/>
            <person name="Narusaka M."/>
            <person name="Shin-i T."/>
            <person name="Nakagawa M."/>
            <person name="Sakamoto N."/>
            <person name="Oishi K."/>
            <person name="Kohara Y."/>
            <person name="Kobayashi M."/>
            <person name="Toyoda A."/>
            <person name="Sakaki Y."/>
            <person name="Sakurai T."/>
            <person name="Iida K."/>
            <person name="Akiyama K."/>
            <person name="Satou M."/>
            <person name="Toyoda T."/>
            <person name="Konagaya A."/>
            <person name="Carninci P."/>
            <person name="Kawai J."/>
            <person name="Hayashizaki Y."/>
            <person name="Shinozaki K."/>
        </authorList>
    </citation>
    <scope>NUCLEOTIDE SEQUENCE [LARGE SCALE MRNA]</scope>
    <source>
        <strain>cv. Columbia</strain>
    </source>
</reference>
<reference key="6">
    <citation type="journal article" date="2002" name="Genome Biol.">
        <title>Evaluation and classification of RING-finger domains encoded by the Arabidopsis genome.</title>
        <authorList>
            <person name="Kosarev P."/>
            <person name="Mayer K.F.X."/>
            <person name="Hardtke C.S."/>
        </authorList>
    </citation>
    <scope>GENE FAMILY ORGANIZATION</scope>
</reference>
<reference key="7">
    <citation type="journal article" date="2004" name="Genetics">
        <title>Isolation and gene expression analysis of Arabidopsis thaliana mutants with constitutive expression of ATL2, an early elicitor-response RING-H2 zinc-finger gene.</title>
        <authorList>
            <person name="Serrano M."/>
            <person name="Guzman P."/>
        </authorList>
    </citation>
    <scope>IDENTIFICATION</scope>
</reference>
<reference key="8">
    <citation type="journal article" date="2005" name="Plant Physiol.">
        <title>Loss-of-function mutations in chitin responsive genes show increased susceptibility to the powdery mildew pathogen Erysiphe cichoracearum.</title>
        <authorList>
            <person name="Ramonell K."/>
            <person name="Berrocal-Lobo M."/>
            <person name="Koh S."/>
            <person name="Wan J."/>
            <person name="Edwards H."/>
            <person name="Stacey G."/>
            <person name="Somerville S."/>
        </authorList>
    </citation>
    <scope>FUNCTION</scope>
    <scope>DISRUPTION PHENOTYPE</scope>
    <scope>INDUCTION BY CHITIN</scope>
</reference>
<reference key="9">
    <citation type="journal article" date="2006" name="J. Mol. Evol.">
        <title>The ATL gene family from Arabidopsis thaliana and Oryza sativa comprises a large number of putative ubiquitin ligases of the RING-H2 type.</title>
        <authorList>
            <person name="Serrano M."/>
            <person name="Parra S."/>
            <person name="Alcaraz L.D."/>
            <person name="Guzman P."/>
        </authorList>
    </citation>
    <scope>NOMENCLATURE</scope>
    <scope>GENE FAMILY ORGANIZATION</scope>
</reference>
<proteinExistence type="evidence at protein level"/>
<evidence type="ECO:0000250" key="1"/>
<evidence type="ECO:0000255" key="2"/>
<evidence type="ECO:0000255" key="3">
    <source>
        <dbReference type="PROSITE-ProRule" id="PRU00175"/>
    </source>
</evidence>
<evidence type="ECO:0000256" key="4">
    <source>
        <dbReference type="SAM" id="MobiDB-lite"/>
    </source>
</evidence>
<evidence type="ECO:0000269" key="5">
    <source>
    </source>
</evidence>
<evidence type="ECO:0000269" key="6">
    <source>
    </source>
</evidence>
<evidence type="ECO:0000305" key="7"/>